<reference key="1">
    <citation type="journal article" date="1993" name="J. Bacteriol.">
        <title>Cloning, sequencing, and expression of the Zymomonas mobilis phosphoglycerate mutase gene (pgm) in Escherichia coli.</title>
        <authorList>
            <person name="Yomano L.P."/>
            <person name="Scopes R.K."/>
            <person name="Ingram L.O."/>
        </authorList>
    </citation>
    <scope>NUCLEOTIDE SEQUENCE [GENOMIC DNA]</scope>
    <source>
        <strain>ATCC 31821 / ZM4 / CP4</strain>
    </source>
</reference>
<reference key="2">
    <citation type="journal article" date="2005" name="Nat. Biotechnol.">
        <title>The genome sequence of the ethanologenic bacterium Zymomonas mobilis ZM4.</title>
        <authorList>
            <person name="Seo J.-S."/>
            <person name="Chong H."/>
            <person name="Park H.S."/>
            <person name="Yoon K.-O."/>
            <person name="Jung C."/>
            <person name="Kim J.J."/>
            <person name="Hong J.H."/>
            <person name="Kim H."/>
            <person name="Kim J.-H."/>
            <person name="Kil J.-I."/>
            <person name="Park C.J."/>
            <person name="Oh H.-M."/>
            <person name="Lee J.-S."/>
            <person name="Jin S.-J."/>
            <person name="Um H.-W."/>
            <person name="Lee H.-J."/>
            <person name="Oh S.-J."/>
            <person name="Kim J.Y."/>
            <person name="Kang H.L."/>
            <person name="Lee S.Y."/>
            <person name="Lee K.J."/>
            <person name="Kang H.S."/>
        </authorList>
    </citation>
    <scope>NUCLEOTIDE SEQUENCE [LARGE SCALE GENOMIC DNA]</scope>
    <source>
        <strain>ATCC 31821 / ZM4 / CP4</strain>
    </source>
</reference>
<gene>
    <name type="primary">ddh</name>
    <name type="synonym">ldhA</name>
    <name type="ordered locus">ZMO1237</name>
</gene>
<comment type="similarity">
    <text evidence="2">Belongs to the D-isomer specific 2-hydroxyacid dehydrogenase family.</text>
</comment>
<feature type="chain" id="PRO_0000076020" description="2-hydroxyacid dehydrogenase homolog">
    <location>
        <begin position="1"/>
        <end position="331"/>
    </location>
</feature>
<feature type="active site" evidence="1">
    <location>
        <position position="236"/>
    </location>
</feature>
<feature type="active site" evidence="1">
    <location>
        <position position="265"/>
    </location>
</feature>
<feature type="active site" description="Proton donor" evidence="1">
    <location>
        <position position="297"/>
    </location>
</feature>
<feature type="binding site" evidence="1">
    <location>
        <begin position="154"/>
        <end position="155"/>
    </location>
    <ligand>
        <name>NAD(+)</name>
        <dbReference type="ChEBI" id="CHEBI:57540"/>
    </ligand>
</feature>
<feature type="binding site" evidence="1">
    <location>
        <begin position="234"/>
        <end position="236"/>
    </location>
    <ligand>
        <name>NAD(+)</name>
        <dbReference type="ChEBI" id="CHEBI:57540"/>
    </ligand>
</feature>
<feature type="binding site" evidence="1">
    <location>
        <position position="260"/>
    </location>
    <ligand>
        <name>NAD(+)</name>
        <dbReference type="ChEBI" id="CHEBI:57540"/>
    </ligand>
</feature>
<feature type="binding site" evidence="1">
    <location>
        <begin position="297"/>
        <end position="300"/>
    </location>
    <ligand>
        <name>NAD(+)</name>
        <dbReference type="ChEBI" id="CHEBI:57540"/>
    </ligand>
</feature>
<feature type="sequence conflict" description="In Ref. 1; AAA71934." evidence="2" ref="1">
    <original>K</original>
    <variation>E</variation>
    <location>
        <position position="184"/>
    </location>
</feature>
<feature type="sequence conflict" description="In Ref. 1; AAA71934." evidence="2" ref="1">
    <original>E</original>
    <variation>G</variation>
    <location>
        <position position="219"/>
    </location>
</feature>
<keyword id="KW-0520">NAD</keyword>
<keyword id="KW-0560">Oxidoreductase</keyword>
<keyword id="KW-1185">Reference proteome</keyword>
<sequence>MRVAIFSSKNYDHHSIEKENEHYGHDLVFLNERLTKETAEKAKDAEAVCIFVNDEANAEVLEILAGLGIKLVALRCAGYNNVDLDAAKKLNIKVVRVPAYSPYSVAEYAVGMLLTLNRQISRGLKRVRENNFSLEGLIGLDVHDKTVGIIGVGHIGSVFAHIMTHGFGANVIAYKPHPDPELAKKVGFRFTSLDEVIETSDIISLHCPLTPENHHMINEETLARAKKGFYLVNTSRGGLVDTKAVIKSLKAKHLGGYAADVYEEEGPLFFENHADDIIEDDILERLIAFPNVVFTGHQAFLTKEALSNIAHSILQDISDAEAGKEMPDALV</sequence>
<protein>
    <recommendedName>
        <fullName>2-hydroxyacid dehydrogenase homolog</fullName>
        <ecNumber>1.1.1.-</ecNumber>
    </recommendedName>
</protein>
<dbReference type="EC" id="1.1.1.-"/>
<dbReference type="EMBL" id="L09650">
    <property type="protein sequence ID" value="AAA71934.1"/>
    <property type="molecule type" value="Genomic_DNA"/>
</dbReference>
<dbReference type="EMBL" id="L09651">
    <property type="protein sequence ID" value="AAA71938.1"/>
    <property type="molecule type" value="Unassigned_DNA"/>
</dbReference>
<dbReference type="EMBL" id="AE008692">
    <property type="protein sequence ID" value="AAV89861.1"/>
    <property type="molecule type" value="Genomic_DNA"/>
</dbReference>
<dbReference type="PIR" id="D40649">
    <property type="entry name" value="D40649"/>
</dbReference>
<dbReference type="RefSeq" id="WP_011241053.1">
    <property type="nucleotide sequence ID" value="NZ_CP035711.1"/>
</dbReference>
<dbReference type="SMR" id="P30799"/>
<dbReference type="STRING" id="264203.ZMO1237"/>
<dbReference type="KEGG" id="zmo:ZMO1237"/>
<dbReference type="eggNOG" id="COG1052">
    <property type="taxonomic scope" value="Bacteria"/>
</dbReference>
<dbReference type="HOGENOM" id="CLU_019796_1_1_5"/>
<dbReference type="Proteomes" id="UP000001173">
    <property type="component" value="Chromosome"/>
</dbReference>
<dbReference type="GO" id="GO:0008720">
    <property type="term" value="F:D-lactate dehydrogenase activity"/>
    <property type="evidence" value="ECO:0007669"/>
    <property type="project" value="TreeGrafter"/>
</dbReference>
<dbReference type="GO" id="GO:0051287">
    <property type="term" value="F:NAD binding"/>
    <property type="evidence" value="ECO:0007669"/>
    <property type="project" value="InterPro"/>
</dbReference>
<dbReference type="CDD" id="cd12183">
    <property type="entry name" value="LDH_like_2"/>
    <property type="match status" value="1"/>
</dbReference>
<dbReference type="FunFam" id="3.40.50.720:FF:000052">
    <property type="entry name" value="D-lactate dehydrogenase"/>
    <property type="match status" value="1"/>
</dbReference>
<dbReference type="Gene3D" id="3.40.50.720">
    <property type="entry name" value="NAD(P)-binding Rossmann-like Domain"/>
    <property type="match status" value="2"/>
</dbReference>
<dbReference type="InterPro" id="IPR006139">
    <property type="entry name" value="D-isomer_2_OHA_DH_cat_dom"/>
</dbReference>
<dbReference type="InterPro" id="IPR029753">
    <property type="entry name" value="D-isomer_DH_CS"/>
</dbReference>
<dbReference type="InterPro" id="IPR029752">
    <property type="entry name" value="D-isomer_DH_CS1"/>
</dbReference>
<dbReference type="InterPro" id="IPR006140">
    <property type="entry name" value="D-isomer_DH_NAD-bd"/>
</dbReference>
<dbReference type="InterPro" id="IPR036291">
    <property type="entry name" value="NAD(P)-bd_dom_sf"/>
</dbReference>
<dbReference type="PANTHER" id="PTHR43026">
    <property type="entry name" value="2-HYDROXYACID DEHYDROGENASE HOMOLOG 1-RELATED"/>
    <property type="match status" value="1"/>
</dbReference>
<dbReference type="PANTHER" id="PTHR43026:SF1">
    <property type="entry name" value="2-HYDROXYACID DEHYDROGENASE HOMOLOG 1-RELATED"/>
    <property type="match status" value="1"/>
</dbReference>
<dbReference type="Pfam" id="PF00389">
    <property type="entry name" value="2-Hacid_dh"/>
    <property type="match status" value="1"/>
</dbReference>
<dbReference type="Pfam" id="PF02826">
    <property type="entry name" value="2-Hacid_dh_C"/>
    <property type="match status" value="1"/>
</dbReference>
<dbReference type="SUPFAM" id="SSF52283">
    <property type="entry name" value="Formate/glycerate dehydrogenase catalytic domain-like"/>
    <property type="match status" value="1"/>
</dbReference>
<dbReference type="SUPFAM" id="SSF51735">
    <property type="entry name" value="NAD(P)-binding Rossmann-fold domains"/>
    <property type="match status" value="1"/>
</dbReference>
<dbReference type="PROSITE" id="PS00065">
    <property type="entry name" value="D_2_HYDROXYACID_DH_1"/>
    <property type="match status" value="1"/>
</dbReference>
<dbReference type="PROSITE" id="PS00670">
    <property type="entry name" value="D_2_HYDROXYACID_DH_2"/>
    <property type="match status" value="1"/>
</dbReference>
<dbReference type="PROSITE" id="PS00671">
    <property type="entry name" value="D_2_HYDROXYACID_DH_3"/>
    <property type="match status" value="1"/>
</dbReference>
<name>DDH_ZYMMO</name>
<accession>P30799</accession>
<accession>Q5NN49</accession>
<organism>
    <name type="scientific">Zymomonas mobilis subsp. mobilis (strain ATCC 31821 / ZM4 / CP4)</name>
    <dbReference type="NCBI Taxonomy" id="264203"/>
    <lineage>
        <taxon>Bacteria</taxon>
        <taxon>Pseudomonadati</taxon>
        <taxon>Pseudomonadota</taxon>
        <taxon>Alphaproteobacteria</taxon>
        <taxon>Sphingomonadales</taxon>
        <taxon>Zymomonadaceae</taxon>
        <taxon>Zymomonas</taxon>
    </lineage>
</organism>
<proteinExistence type="inferred from homology"/>
<evidence type="ECO:0000250" key="1"/>
<evidence type="ECO:0000305" key="2"/>